<comment type="function">
    <text evidence="3">Required for normal morphology and function of ciliated sensory organs.</text>
</comment>
<comment type="subcellular location">
    <subcellularLocation>
        <location evidence="3">Secreted</location>
        <location evidence="3">Extracellular space</location>
        <location evidence="3">Extracellular matrix</location>
    </subcellularLocation>
    <subcellularLocation>
        <location evidence="3">Cytoplasm</location>
    </subcellularLocation>
</comment>
<comment type="developmental stage">
    <text evidence="3">During embryonic stage 16-17, expressed in accessory cells of all ciliated mechanosensory and chemosensory organs (at protein level). Specifically, detected in the cap cell of chordotonal organs and the shaft cell of external sensory organs (at protein level). Also detected in chemosensory organs including the pharyngeal organs, dorsal organ, terminal organ and ventral organ (at protein level). Expression appears to be temporally restricted to late embryogenesis and is not detected during larval stages (at protein level).</text>
</comment>
<comment type="disruption phenotype">
    <text evidence="3">Viable and fertile. Larval locomotion is severely uncoordinated and the chemotactic response to sucrose is reduced. Morphology of the lch5 mechanosensory organ is abnormal, with disorganized cilia and neuronal cell bodies, although cilia still make contact with the cap cell.</text>
</comment>
<comment type="sequence caution" evidence="4">
    <conflict type="frameshift">
        <sequence resource="EMBL-CDS" id="AAQ23582"/>
    </conflict>
</comment>
<comment type="sequence caution" evidence="4">
    <conflict type="frameshift">
        <sequence resource="EMBL-CDS" id="ADP89557"/>
    </conflict>
</comment>
<evidence type="ECO:0000255" key="1"/>
<evidence type="ECO:0000256" key="2">
    <source>
        <dbReference type="SAM" id="MobiDB-lite"/>
    </source>
</evidence>
<evidence type="ECO:0000269" key="3">
    <source>
    </source>
</evidence>
<evidence type="ECO:0000305" key="4"/>
<evidence type="ECO:0000312" key="5">
    <source>
        <dbReference type="EMBL" id="AAQ23582.1"/>
    </source>
</evidence>
<evidence type="ECO:0000312" key="6">
    <source>
        <dbReference type="FlyBase" id="FBgn0036995"/>
    </source>
</evidence>
<evidence type="ECO:0000312" key="7">
    <source>
        <dbReference type="Proteomes" id="UP000000803"/>
    </source>
</evidence>
<reference key="1">
    <citation type="journal article" date="2000" name="Science">
        <title>The genome sequence of Drosophila melanogaster.</title>
        <authorList>
            <person name="Adams M.D."/>
            <person name="Celniker S.E."/>
            <person name="Holt R.A."/>
            <person name="Evans C.A."/>
            <person name="Gocayne J.D."/>
            <person name="Amanatides P.G."/>
            <person name="Scherer S.E."/>
            <person name="Li P.W."/>
            <person name="Hoskins R.A."/>
            <person name="Galle R.F."/>
            <person name="George R.A."/>
            <person name="Lewis S.E."/>
            <person name="Richards S."/>
            <person name="Ashburner M."/>
            <person name="Henderson S.N."/>
            <person name="Sutton G.G."/>
            <person name="Wortman J.R."/>
            <person name="Yandell M.D."/>
            <person name="Zhang Q."/>
            <person name="Chen L.X."/>
            <person name="Brandon R.C."/>
            <person name="Rogers Y.-H.C."/>
            <person name="Blazej R.G."/>
            <person name="Champe M."/>
            <person name="Pfeiffer B.D."/>
            <person name="Wan K.H."/>
            <person name="Doyle C."/>
            <person name="Baxter E.G."/>
            <person name="Helt G."/>
            <person name="Nelson C.R."/>
            <person name="Miklos G.L.G."/>
            <person name="Abril J.F."/>
            <person name="Agbayani A."/>
            <person name="An H.-J."/>
            <person name="Andrews-Pfannkoch C."/>
            <person name="Baldwin D."/>
            <person name="Ballew R.M."/>
            <person name="Basu A."/>
            <person name="Baxendale J."/>
            <person name="Bayraktaroglu L."/>
            <person name="Beasley E.M."/>
            <person name="Beeson K.Y."/>
            <person name="Benos P.V."/>
            <person name="Berman B.P."/>
            <person name="Bhandari D."/>
            <person name="Bolshakov S."/>
            <person name="Borkova D."/>
            <person name="Botchan M.R."/>
            <person name="Bouck J."/>
            <person name="Brokstein P."/>
            <person name="Brottier P."/>
            <person name="Burtis K.C."/>
            <person name="Busam D.A."/>
            <person name="Butler H."/>
            <person name="Cadieu E."/>
            <person name="Center A."/>
            <person name="Chandra I."/>
            <person name="Cherry J.M."/>
            <person name="Cawley S."/>
            <person name="Dahlke C."/>
            <person name="Davenport L.B."/>
            <person name="Davies P."/>
            <person name="de Pablos B."/>
            <person name="Delcher A."/>
            <person name="Deng Z."/>
            <person name="Mays A.D."/>
            <person name="Dew I."/>
            <person name="Dietz S.M."/>
            <person name="Dodson K."/>
            <person name="Doup L.E."/>
            <person name="Downes M."/>
            <person name="Dugan-Rocha S."/>
            <person name="Dunkov B.C."/>
            <person name="Dunn P."/>
            <person name="Durbin K.J."/>
            <person name="Evangelista C.C."/>
            <person name="Ferraz C."/>
            <person name="Ferriera S."/>
            <person name="Fleischmann W."/>
            <person name="Fosler C."/>
            <person name="Gabrielian A.E."/>
            <person name="Garg N.S."/>
            <person name="Gelbart W.M."/>
            <person name="Glasser K."/>
            <person name="Glodek A."/>
            <person name="Gong F."/>
            <person name="Gorrell J.H."/>
            <person name="Gu Z."/>
            <person name="Guan P."/>
            <person name="Harris M."/>
            <person name="Harris N.L."/>
            <person name="Harvey D.A."/>
            <person name="Heiman T.J."/>
            <person name="Hernandez J.R."/>
            <person name="Houck J."/>
            <person name="Hostin D."/>
            <person name="Houston K.A."/>
            <person name="Howland T.J."/>
            <person name="Wei M.-H."/>
            <person name="Ibegwam C."/>
            <person name="Jalali M."/>
            <person name="Kalush F."/>
            <person name="Karpen G.H."/>
            <person name="Ke Z."/>
            <person name="Kennison J.A."/>
            <person name="Ketchum K.A."/>
            <person name="Kimmel B.E."/>
            <person name="Kodira C.D."/>
            <person name="Kraft C.L."/>
            <person name="Kravitz S."/>
            <person name="Kulp D."/>
            <person name="Lai Z."/>
            <person name="Lasko P."/>
            <person name="Lei Y."/>
            <person name="Levitsky A.A."/>
            <person name="Li J.H."/>
            <person name="Li Z."/>
            <person name="Liang Y."/>
            <person name="Lin X."/>
            <person name="Liu X."/>
            <person name="Mattei B."/>
            <person name="McIntosh T.C."/>
            <person name="McLeod M.P."/>
            <person name="McPherson D."/>
            <person name="Merkulov G."/>
            <person name="Milshina N.V."/>
            <person name="Mobarry C."/>
            <person name="Morris J."/>
            <person name="Moshrefi A."/>
            <person name="Mount S.M."/>
            <person name="Moy M."/>
            <person name="Murphy B."/>
            <person name="Murphy L."/>
            <person name="Muzny D.M."/>
            <person name="Nelson D.L."/>
            <person name="Nelson D.R."/>
            <person name="Nelson K.A."/>
            <person name="Nixon K."/>
            <person name="Nusskern D.R."/>
            <person name="Pacleb J.M."/>
            <person name="Palazzolo M."/>
            <person name="Pittman G.S."/>
            <person name="Pan S."/>
            <person name="Pollard J."/>
            <person name="Puri V."/>
            <person name="Reese M.G."/>
            <person name="Reinert K."/>
            <person name="Remington K."/>
            <person name="Saunders R.D.C."/>
            <person name="Scheeler F."/>
            <person name="Shen H."/>
            <person name="Shue B.C."/>
            <person name="Siden-Kiamos I."/>
            <person name="Simpson M."/>
            <person name="Skupski M.P."/>
            <person name="Smith T.J."/>
            <person name="Spier E."/>
            <person name="Spradling A.C."/>
            <person name="Stapleton M."/>
            <person name="Strong R."/>
            <person name="Sun E."/>
            <person name="Svirskas R."/>
            <person name="Tector C."/>
            <person name="Turner R."/>
            <person name="Venter E."/>
            <person name="Wang A.H."/>
            <person name="Wang X."/>
            <person name="Wang Z.-Y."/>
            <person name="Wassarman D.A."/>
            <person name="Weinstock G.M."/>
            <person name="Weissenbach J."/>
            <person name="Williams S.M."/>
            <person name="Woodage T."/>
            <person name="Worley K.C."/>
            <person name="Wu D."/>
            <person name="Yang S."/>
            <person name="Yao Q.A."/>
            <person name="Ye J."/>
            <person name="Yeh R.-F."/>
            <person name="Zaveri J.S."/>
            <person name="Zhan M."/>
            <person name="Zhang G."/>
            <person name="Zhao Q."/>
            <person name="Zheng L."/>
            <person name="Zheng X.H."/>
            <person name="Zhong F.N."/>
            <person name="Zhong W."/>
            <person name="Zhou X."/>
            <person name="Zhu S.C."/>
            <person name="Zhu X."/>
            <person name="Smith H.O."/>
            <person name="Gibbs R.A."/>
            <person name="Myers E.W."/>
            <person name="Rubin G.M."/>
            <person name="Venter J.C."/>
        </authorList>
    </citation>
    <scope>NUCLEOTIDE SEQUENCE [LARGE SCALE GENOMIC DNA]</scope>
    <source>
        <strain evidence="7">Berkeley</strain>
    </source>
</reference>
<reference key="2">
    <citation type="journal article" date="2002" name="Genome Biol.">
        <title>Annotation of the Drosophila melanogaster euchromatic genome: a systematic review.</title>
        <authorList>
            <person name="Misra S."/>
            <person name="Crosby M.A."/>
            <person name="Mungall C.J."/>
            <person name="Matthews B.B."/>
            <person name="Campbell K.S."/>
            <person name="Hradecky P."/>
            <person name="Huang Y."/>
            <person name="Kaminker J.S."/>
            <person name="Millburn G.H."/>
            <person name="Prochnik S.E."/>
            <person name="Smith C.D."/>
            <person name="Tupy J.L."/>
            <person name="Whitfield E.J."/>
            <person name="Bayraktaroglu L."/>
            <person name="Berman B.P."/>
            <person name="Bettencourt B.R."/>
            <person name="Celniker S.E."/>
            <person name="de Grey A.D.N.J."/>
            <person name="Drysdale R.A."/>
            <person name="Harris N.L."/>
            <person name="Richter J."/>
            <person name="Russo S."/>
            <person name="Schroeder A.J."/>
            <person name="Shu S.Q."/>
            <person name="Stapleton M."/>
            <person name="Yamada C."/>
            <person name="Ashburner M."/>
            <person name="Gelbart W.M."/>
            <person name="Rubin G.M."/>
            <person name="Lewis S.E."/>
        </authorList>
    </citation>
    <scope>GENOME REANNOTATION</scope>
    <source>
        <strain evidence="7">Berkeley</strain>
    </source>
</reference>
<reference key="3">
    <citation type="submission" date="2011-02" db="EMBL/GenBank/DDBJ databases">
        <authorList>
            <person name="Stapleton M."/>
            <person name="Booth B."/>
            <person name="Brokstein P."/>
            <person name="Hong L."/>
            <person name="Agbayani A."/>
            <person name="Carlson J."/>
            <person name="Champe M."/>
            <person name="Chavez C."/>
            <person name="Dorsett V."/>
            <person name="Dresnek D."/>
            <person name="Farfan D."/>
            <person name="Frise E."/>
            <person name="George R."/>
            <person name="Gonzalez M."/>
            <person name="Guarin H."/>
            <person name="Kronmiller B."/>
            <person name="Li P."/>
            <person name="Liao G."/>
            <person name="Miranda A."/>
            <person name="Mungall C.J."/>
            <person name="Nunoo J."/>
            <person name="Pacleb J."/>
            <person name="Paragas V."/>
            <person name="Park S."/>
            <person name="Patel S."/>
            <person name="Phouanenavong S."/>
            <person name="Wan K."/>
            <person name="Yu C."/>
            <person name="Lewis S.E."/>
            <person name="Rubin G.M."/>
            <person name="Celniker S."/>
        </authorList>
    </citation>
    <scope>NUCLEOTIDE SEQUENCE [LARGE SCALE MRNA]</scope>
    <source>
        <strain evidence="5">Berkeley</strain>
        <tissue evidence="5">Embryo</tissue>
    </source>
</reference>
<reference key="4">
    <citation type="journal article" date="2014" name="Genetics">
        <title>The extracellular matrix protein artichoke is required for integrity of ciliated mechanosensory and chemosensory organs in Drosophila embryos.</title>
        <authorList>
            <person name="Andres M."/>
            <person name="Turiegano E."/>
            <person name="Goepfert M.C."/>
            <person name="Canal I."/>
            <person name="Torroja L."/>
        </authorList>
    </citation>
    <scope>FUNCTION</scope>
    <scope>SUBCELLULAR LOCATION</scope>
    <scope>DEVELOPMENTAL STAGE</scope>
    <scope>DISRUPTION PHENOTYPE</scope>
</reference>
<organism>
    <name type="scientific">Drosophila melanogaster</name>
    <name type="common">Fruit fly</name>
    <dbReference type="NCBI Taxonomy" id="7227"/>
    <lineage>
        <taxon>Eukaryota</taxon>
        <taxon>Metazoa</taxon>
        <taxon>Ecdysozoa</taxon>
        <taxon>Arthropoda</taxon>
        <taxon>Hexapoda</taxon>
        <taxon>Insecta</taxon>
        <taxon>Pterygota</taxon>
        <taxon>Neoptera</taxon>
        <taxon>Endopterygota</taxon>
        <taxon>Diptera</taxon>
        <taxon>Brachycera</taxon>
        <taxon>Muscomorpha</taxon>
        <taxon>Ephydroidea</taxon>
        <taxon>Drosophilidae</taxon>
        <taxon>Drosophila</taxon>
        <taxon>Sophophora</taxon>
    </lineage>
</organism>
<protein>
    <recommendedName>
        <fullName evidence="6">Protein artichoke</fullName>
    </recommendedName>
</protein>
<gene>
    <name evidence="6" type="primary">atk</name>
    <name evidence="6" type="ORF">CG5195</name>
</gene>
<feature type="signal peptide" evidence="1">
    <location>
        <begin position="1"/>
        <end position="19"/>
    </location>
</feature>
<feature type="chain" id="PRO_5007325100" description="Protein artichoke" evidence="1">
    <location>
        <begin position="20"/>
        <end position="1535"/>
    </location>
</feature>
<feature type="repeat" description="LRR 1" evidence="1">
    <location>
        <begin position="64"/>
        <end position="87"/>
    </location>
</feature>
<feature type="repeat" description="LRR 2" evidence="1">
    <location>
        <begin position="89"/>
        <end position="110"/>
    </location>
</feature>
<feature type="repeat" description="LRR 3" evidence="1">
    <location>
        <begin position="112"/>
        <end position="135"/>
    </location>
</feature>
<feature type="repeat" description="LRR 4" evidence="1">
    <location>
        <begin position="136"/>
        <end position="157"/>
    </location>
</feature>
<feature type="repeat" description="LRR 5" evidence="1">
    <location>
        <begin position="158"/>
        <end position="181"/>
    </location>
</feature>
<feature type="repeat" description="LRR 6" evidence="1">
    <location>
        <begin position="183"/>
        <end position="206"/>
    </location>
</feature>
<feature type="repeat" description="LRR 7" evidence="1">
    <location>
        <begin position="207"/>
        <end position="230"/>
    </location>
</feature>
<feature type="repeat" description="LRR 8" evidence="1">
    <location>
        <begin position="231"/>
        <end position="256"/>
    </location>
</feature>
<feature type="repeat" description="LRR 9" evidence="1">
    <location>
        <begin position="257"/>
        <end position="280"/>
    </location>
</feature>
<feature type="repeat" description="LRR 10" evidence="1">
    <location>
        <begin position="281"/>
        <end position="304"/>
    </location>
</feature>
<feature type="repeat" description="LRR 11" evidence="1">
    <location>
        <begin position="306"/>
        <end position="328"/>
    </location>
</feature>
<feature type="repeat" description="LRR 12" evidence="1">
    <location>
        <begin position="331"/>
        <end position="356"/>
    </location>
</feature>
<feature type="repeat" description="LRR 13" evidence="1">
    <location>
        <begin position="357"/>
        <end position="380"/>
    </location>
</feature>
<feature type="repeat" description="LRR 14" evidence="1">
    <location>
        <begin position="382"/>
        <end position="404"/>
    </location>
</feature>
<feature type="repeat" description="LRR 15" evidence="1">
    <location>
        <begin position="406"/>
        <end position="429"/>
    </location>
</feature>
<feature type="repeat" description="LRR 16" evidence="1">
    <location>
        <begin position="430"/>
        <end position="452"/>
    </location>
</feature>
<feature type="repeat" description="LRR 17" evidence="1">
    <location>
        <begin position="453"/>
        <end position="476"/>
    </location>
</feature>
<feature type="repeat" description="LRR 18" evidence="1">
    <location>
        <begin position="478"/>
        <end position="500"/>
    </location>
</feature>
<feature type="repeat" description="LRR 19" evidence="1">
    <location>
        <begin position="521"/>
        <end position="545"/>
    </location>
</feature>
<feature type="repeat" description="LRR 20" evidence="1">
    <location>
        <begin position="548"/>
        <end position="571"/>
    </location>
</feature>
<feature type="repeat" description="LRR 21" evidence="1">
    <location>
        <begin position="573"/>
        <end position="595"/>
    </location>
</feature>
<feature type="repeat" description="LRR 22" evidence="1">
    <location>
        <begin position="597"/>
        <end position="619"/>
    </location>
</feature>
<feature type="repeat" description="LRR 23" evidence="1">
    <location>
        <begin position="620"/>
        <end position="643"/>
    </location>
</feature>
<feature type="repeat" description="LRR 24" evidence="1">
    <location>
        <begin position="645"/>
        <end position="667"/>
    </location>
</feature>
<feature type="repeat" description="LRR 25" evidence="1">
    <location>
        <begin position="669"/>
        <end position="691"/>
    </location>
</feature>
<feature type="repeat" description="LRR 26" evidence="1">
    <location>
        <begin position="692"/>
        <end position="714"/>
    </location>
</feature>
<feature type="repeat" description="LRR 27" evidence="1">
    <location>
        <begin position="716"/>
        <end position="738"/>
    </location>
</feature>
<feature type="repeat" description="LRR 28" evidence="1">
    <location>
        <begin position="739"/>
        <end position="762"/>
    </location>
</feature>
<feature type="repeat" description="LRR 29" evidence="1">
    <location>
        <begin position="764"/>
        <end position="786"/>
    </location>
</feature>
<feature type="repeat" description="LRR 30" evidence="1">
    <location>
        <begin position="788"/>
        <end position="810"/>
    </location>
</feature>
<feature type="repeat" description="LRR 31" evidence="1">
    <location>
        <begin position="811"/>
        <end position="834"/>
    </location>
</feature>
<feature type="repeat" description="LRR 32" evidence="1">
    <location>
        <begin position="835"/>
        <end position="858"/>
    </location>
</feature>
<feature type="repeat" description="LRR 33" evidence="1">
    <location>
        <begin position="860"/>
        <end position="882"/>
    </location>
</feature>
<feature type="repeat" description="LRR 34" evidence="1">
    <location>
        <begin position="883"/>
        <end position="906"/>
    </location>
</feature>
<feature type="domain" description="LRRCT" evidence="1">
    <location>
        <begin position="919"/>
        <end position="963"/>
    </location>
</feature>
<feature type="region of interest" description="Disordered" evidence="2">
    <location>
        <begin position="1036"/>
        <end position="1055"/>
    </location>
</feature>
<feature type="region of interest" description="Disordered" evidence="2">
    <location>
        <begin position="1253"/>
        <end position="1331"/>
    </location>
</feature>
<feature type="region of interest" description="Disordered" evidence="2">
    <location>
        <begin position="1377"/>
        <end position="1416"/>
    </location>
</feature>
<feature type="region of interest" description="Disordered" evidence="2">
    <location>
        <begin position="1429"/>
        <end position="1449"/>
    </location>
</feature>
<feature type="compositionally biased region" description="Polar residues" evidence="2">
    <location>
        <begin position="1253"/>
        <end position="1270"/>
    </location>
</feature>
<feature type="compositionally biased region" description="Low complexity" evidence="2">
    <location>
        <begin position="1271"/>
        <end position="1285"/>
    </location>
</feature>
<feature type="compositionally biased region" description="Low complexity" evidence="2">
    <location>
        <begin position="1293"/>
        <end position="1315"/>
    </location>
</feature>
<feature type="compositionally biased region" description="Polar residues" evidence="2">
    <location>
        <begin position="1316"/>
        <end position="1328"/>
    </location>
</feature>
<feature type="compositionally biased region" description="Polar residues" evidence="2">
    <location>
        <begin position="1377"/>
        <end position="1391"/>
    </location>
</feature>
<feature type="compositionally biased region" description="Pro residues" evidence="2">
    <location>
        <begin position="1398"/>
        <end position="1407"/>
    </location>
</feature>
<feature type="sequence conflict" description="In Ref. 3; AAQ23582/ADP89557." evidence="4" ref="3">
    <original>H</original>
    <variation>R</variation>
    <location>
        <position position="500"/>
    </location>
</feature>
<feature type="sequence conflict" description="In Ref. 3; AAQ23582/ADP89557." evidence="4" ref="3">
    <original>E</original>
    <variation>K</variation>
    <location>
        <position position="1268"/>
    </location>
</feature>
<feature type="sequence conflict" description="In Ref. 3; AAQ23582/ADP89557." evidence="4" ref="3">
    <original>E</original>
    <variation>G</variation>
    <location>
        <position position="1434"/>
    </location>
</feature>
<keyword id="KW-0963">Cytoplasm</keyword>
<keyword id="KW-0272">Extracellular matrix</keyword>
<keyword id="KW-0433">Leucine-rich repeat</keyword>
<keyword id="KW-1185">Reference proteome</keyword>
<keyword id="KW-0677">Repeat</keyword>
<keyword id="KW-0964">Secreted</keyword>
<keyword id="KW-0716">Sensory transduction</keyword>
<keyword id="KW-0732">Signal</keyword>
<accession>Q9VPF0</accession>
<accession>E3CTU4</accession>
<accession>F0JAL6</accession>
<accession>Q6NR19</accession>
<sequence>MMLLPIFLLLCIGINLIRAESCPPSQAILPCRCSLRGKEIQIWCSHSNLPQIMDGLKAVERNIKGRIDELVLENNQLPALPGRFFGSLQIVRLMLRHNSIERVSNGWLNELENGLVEIFVVEPQLRSIPAESLNGMINMLAITIQSEELKHLPDFSGLLSLTYLSVQTGALQELPSHLFRHLPKLQHIHITGGSGLTRLEAGLFDGLISLKNLDLSHNGLNWIHLRALSRLPNLVSLKLSHNQISDVGMVGRIVKDLEHLKKLRLDNNLITVIEDGSFVDLPNLSELHLNDNRITELQYGAFLRTPQLKTIYLQNNLIRRIHPESLLQASGSGVEAVHMYNNEIGHVEALRALLDALPRLRYLDMSGNLLSELPYGALRGHGTLEQLHLNHNHLRLIERDALMAMPALRELRMRNNSLSSDLPLPFWNLPGLKGLDLAQNQFARVDSQLLAGLPSLRRLDLSENGLIELAPNSFRHNPLLETLNISSNELTKIHSSTLIHLERLFEVDASYNQLKSVIAGLPRIVERISLKGNQITSLPAAASKDLQLPNLRMLDLSQNRIEQLPRHGFQGAMELRVLSLAQNELRQLKDTSFIGIQRLELLHLQENQLGEADERALLPLAELRNLNLQSNKLEAITDNFFSNNSRLEQLDLSRNLIRSISPTAFDTQRSLEYLDLSGNALLDISVGLGNLNNLRDIDLSYNQISRIQSDVIGGWRNVVEIRLSNNLIVELQQGTFRNLPKLQYLDLSSNEIRNVEPGALKGLDELQEFVLADNKLVELKDHVFEELPSLLASHFQYNKLRYISPESFHNANSLVFLNLSNNHFRNMENIGLRSMRNLEVLDLSTNGVKLVSTMPLKALNWLVELKMDNNQICRIQGSPFETMPRLRVLSMRNNQLRSIKERTFRNVRGNIAILDVDGNPIDCNCEMQWLSVWLQETNFPYPGPKCQDGRLLRSARMERSLCVGADIYGNERTDGNQLPLLNEHGDVFQRDLPDDFNDECEAGEGTRLPGDRPLVGESEYFYDQYVDATEAPDTTHSAISTSQRPKPTPTINSNIDLNNTILHTKYFNRKPQPGSGSPFTFFGYPLPSVSLGRFFGFGDRGRKQRTDSNDDMPATHRMAHISLPSGRGKTRMYQPNSAEFEKYLKDQQKQEKLNIARNRYVDTDSTTSSMEDALSNESGSAATTVGVFRTTFREPSSIERGGFRPIVPAHVGGFMPVHDPQQRRGLVEVVNITGNPSEIVQGIGQRKFIPISTQARPKPTKSSGESSETATYEVTETTPDITTTTPLMQRIATSTTKASTTTTRSTTTTSTTQVTPAENNASSSTELDSQYDDEDLEAQSVTLLRPPPLVQTTTAETILLIPPAEEHVAQIKSRSWVTTTTPQSPSDNQVTLAGPTSTVPPPPPASPPLRGGGRSTITKVYTPYQQQVAQPTAEEYQRTTPSGDNEGVASEHQLTANAQKRTELELLQVDRVDRKDGMDWYYESFKKKRDFNGGAAVRKTAHKEVFYDGVAASSSWNRLHKEILFISLLLLWRAC</sequence>
<name>ATK_DROME</name>
<dbReference type="EMBL" id="AE014296">
    <property type="protein sequence ID" value="AAF51605.2"/>
    <property type="molecule type" value="Genomic_DNA"/>
</dbReference>
<dbReference type="EMBL" id="AE014296">
    <property type="protein sequence ID" value="AGB94806.1"/>
    <property type="molecule type" value="Genomic_DNA"/>
</dbReference>
<dbReference type="EMBL" id="AE014296">
    <property type="protein sequence ID" value="AGB94807.1"/>
    <property type="molecule type" value="Genomic_DNA"/>
</dbReference>
<dbReference type="EMBL" id="BT010264">
    <property type="protein sequence ID" value="AAQ23582.1"/>
    <property type="status" value="ALT_FRAME"/>
    <property type="molecule type" value="mRNA"/>
</dbReference>
<dbReference type="EMBL" id="BT125760">
    <property type="protein sequence ID" value="ADP89557.1"/>
    <property type="status" value="ALT_FRAME"/>
    <property type="molecule type" value="mRNA"/>
</dbReference>
<dbReference type="EMBL" id="BT126058">
    <property type="protein sequence ID" value="ADY17757.1"/>
    <property type="molecule type" value="mRNA"/>
</dbReference>
<dbReference type="RefSeq" id="NP_001262113.1">
    <property type="nucleotide sequence ID" value="NM_001275184.1"/>
</dbReference>
<dbReference type="RefSeq" id="NP_001262114.1">
    <property type="nucleotide sequence ID" value="NM_001275185.1"/>
</dbReference>
<dbReference type="RefSeq" id="NP_649228.1">
    <property type="nucleotide sequence ID" value="NM_140971.1"/>
</dbReference>
<dbReference type="SMR" id="Q9VPF0"/>
<dbReference type="FunCoup" id="Q9VPF0">
    <property type="interactions" value="2"/>
</dbReference>
<dbReference type="STRING" id="7227.FBpp0077881"/>
<dbReference type="GlyGen" id="Q9VPF0">
    <property type="glycosylation" value="2 sites"/>
</dbReference>
<dbReference type="PaxDb" id="7227-FBpp0303960"/>
<dbReference type="EnsemblMetazoa" id="FBtr0078223">
    <property type="protein sequence ID" value="FBpp0077881"/>
    <property type="gene ID" value="FBgn0036995"/>
</dbReference>
<dbReference type="EnsemblMetazoa" id="FBtr0331569">
    <property type="protein sequence ID" value="FBpp0303959"/>
    <property type="gene ID" value="FBgn0036995"/>
</dbReference>
<dbReference type="EnsemblMetazoa" id="FBtr0331570">
    <property type="protein sequence ID" value="FBpp0303960"/>
    <property type="gene ID" value="FBgn0036995"/>
</dbReference>
<dbReference type="GeneID" id="40266"/>
<dbReference type="KEGG" id="dme:Dmel_CG5195"/>
<dbReference type="UCSC" id="CG5195-RA">
    <property type="organism name" value="d. melanogaster"/>
</dbReference>
<dbReference type="AGR" id="FB:FBgn0036995"/>
<dbReference type="CTD" id="40266"/>
<dbReference type="FlyBase" id="FBgn0036995">
    <property type="gene designation" value="atk"/>
</dbReference>
<dbReference type="VEuPathDB" id="VectorBase:FBgn0036995"/>
<dbReference type="eggNOG" id="KOG0619">
    <property type="taxonomic scope" value="Eukaryota"/>
</dbReference>
<dbReference type="HOGENOM" id="CLU_003890_0_0_1"/>
<dbReference type="InParanoid" id="Q9VPF0"/>
<dbReference type="OMA" id="YFNRRPQ"/>
<dbReference type="OrthoDB" id="8195690at2759"/>
<dbReference type="PhylomeDB" id="Q9VPF0"/>
<dbReference type="BioGRID-ORCS" id="40266">
    <property type="hits" value="0 hits in 1 CRISPR screen"/>
</dbReference>
<dbReference type="GenomeRNAi" id="40266"/>
<dbReference type="PRO" id="PR:Q9VPF0"/>
<dbReference type="Proteomes" id="UP000000803">
    <property type="component" value="Chromosome 3L"/>
</dbReference>
<dbReference type="Bgee" id="FBgn0036995">
    <property type="expression patterns" value="Expressed in chemosensory organ and 10 other cell types or tissues"/>
</dbReference>
<dbReference type="GO" id="GO:0005737">
    <property type="term" value="C:cytoplasm"/>
    <property type="evidence" value="ECO:0000314"/>
    <property type="project" value="FlyBase"/>
</dbReference>
<dbReference type="GO" id="GO:0031012">
    <property type="term" value="C:extracellular matrix"/>
    <property type="evidence" value="ECO:0000314"/>
    <property type="project" value="FlyBase"/>
</dbReference>
<dbReference type="GO" id="GO:0005576">
    <property type="term" value="C:extracellular region"/>
    <property type="evidence" value="ECO:0007669"/>
    <property type="project" value="UniProtKB-KW"/>
</dbReference>
<dbReference type="GO" id="GO:0060271">
    <property type="term" value="P:cilium assembly"/>
    <property type="evidence" value="ECO:0000315"/>
    <property type="project" value="FlyBase"/>
</dbReference>
<dbReference type="GO" id="GO:0040011">
    <property type="term" value="P:locomotion"/>
    <property type="evidence" value="ECO:0000315"/>
    <property type="project" value="FlyBase"/>
</dbReference>
<dbReference type="GO" id="GO:0007423">
    <property type="term" value="P:sensory organ development"/>
    <property type="evidence" value="ECO:0000315"/>
    <property type="project" value="FlyBase"/>
</dbReference>
<dbReference type="FunFam" id="3.80.10.10:FF:001186">
    <property type="entry name" value="GL12775"/>
    <property type="match status" value="1"/>
</dbReference>
<dbReference type="Gene3D" id="3.80.10.10">
    <property type="entry name" value="Ribonuclease Inhibitor"/>
    <property type="match status" value="6"/>
</dbReference>
<dbReference type="InterPro" id="IPR000483">
    <property type="entry name" value="Cys-rich_flank_reg_C"/>
</dbReference>
<dbReference type="InterPro" id="IPR050328">
    <property type="entry name" value="Dev_Immune_Receptor"/>
</dbReference>
<dbReference type="InterPro" id="IPR001611">
    <property type="entry name" value="Leu-rich_rpt"/>
</dbReference>
<dbReference type="InterPro" id="IPR003591">
    <property type="entry name" value="Leu-rich_rpt_typical-subtyp"/>
</dbReference>
<dbReference type="InterPro" id="IPR032675">
    <property type="entry name" value="LRR_dom_sf"/>
</dbReference>
<dbReference type="PANTHER" id="PTHR24373">
    <property type="entry name" value="SLIT RELATED LEUCINE-RICH REPEAT NEURONAL PROTEIN"/>
    <property type="match status" value="1"/>
</dbReference>
<dbReference type="PANTHER" id="PTHR24373:SF275">
    <property type="entry name" value="TIR DOMAIN-CONTAINING PROTEIN"/>
    <property type="match status" value="1"/>
</dbReference>
<dbReference type="Pfam" id="PF13855">
    <property type="entry name" value="LRR_8"/>
    <property type="match status" value="8"/>
</dbReference>
<dbReference type="SMART" id="SM00365">
    <property type="entry name" value="LRR_SD22"/>
    <property type="match status" value="8"/>
</dbReference>
<dbReference type="SMART" id="SM00369">
    <property type="entry name" value="LRR_TYP"/>
    <property type="match status" value="28"/>
</dbReference>
<dbReference type="SMART" id="SM00082">
    <property type="entry name" value="LRRCT"/>
    <property type="match status" value="1"/>
</dbReference>
<dbReference type="SUPFAM" id="SSF52058">
    <property type="entry name" value="L domain-like"/>
    <property type="match status" value="4"/>
</dbReference>
<dbReference type="PROSITE" id="PS51450">
    <property type="entry name" value="LRR"/>
    <property type="match status" value="29"/>
</dbReference>
<proteinExistence type="evidence at protein level"/>